<feature type="chain" id="PRO_1000206482" description="Glycerol-1-phosphate dehydrogenase [NAD(P)+]">
    <location>
        <begin position="1"/>
        <end position="350"/>
    </location>
</feature>
<feature type="binding site" evidence="1">
    <location>
        <begin position="97"/>
        <end position="101"/>
    </location>
    <ligand>
        <name>NAD(+)</name>
        <dbReference type="ChEBI" id="CHEBI:57540"/>
    </ligand>
</feature>
<feature type="binding site" evidence="1">
    <location>
        <begin position="119"/>
        <end position="122"/>
    </location>
    <ligand>
        <name>NAD(+)</name>
        <dbReference type="ChEBI" id="CHEBI:57540"/>
    </ligand>
</feature>
<feature type="binding site" evidence="1">
    <location>
        <position position="124"/>
    </location>
    <ligand>
        <name>substrate</name>
    </ligand>
</feature>
<feature type="binding site" evidence="1">
    <location>
        <position position="128"/>
    </location>
    <ligand>
        <name>NAD(+)</name>
        <dbReference type="ChEBI" id="CHEBI:57540"/>
    </ligand>
</feature>
<feature type="binding site" evidence="1">
    <location>
        <position position="171"/>
    </location>
    <ligand>
        <name>substrate</name>
    </ligand>
</feature>
<feature type="binding site" evidence="1">
    <location>
        <position position="171"/>
    </location>
    <ligand>
        <name>Zn(2+)</name>
        <dbReference type="ChEBI" id="CHEBI:29105"/>
        <note>catalytic</note>
    </ligand>
</feature>
<feature type="binding site" evidence="1">
    <location>
        <position position="251"/>
    </location>
    <ligand>
        <name>Zn(2+)</name>
        <dbReference type="ChEBI" id="CHEBI:29105"/>
        <note>catalytic</note>
    </ligand>
</feature>
<feature type="binding site" evidence="1">
    <location>
        <position position="255"/>
    </location>
    <ligand>
        <name>substrate</name>
    </ligand>
</feature>
<feature type="binding site" evidence="1">
    <location>
        <position position="267"/>
    </location>
    <ligand>
        <name>Zn(2+)</name>
        <dbReference type="ChEBI" id="CHEBI:29105"/>
        <note>catalytic</note>
    </ligand>
</feature>
<comment type="function">
    <text evidence="1">Catalyzes the NAD(P)H-dependent reduction of dihydroxyacetonephosphate (DHAP or glycerone phosphate) to glycerol 1-phosphate (G1P). The G1P thus generated is used as the glycerophosphate backbone of phospholipids in the cellular membranes of Archaea.</text>
</comment>
<comment type="catalytic activity">
    <reaction evidence="1">
        <text>sn-glycerol 1-phosphate + NAD(+) = dihydroxyacetone phosphate + NADH + H(+)</text>
        <dbReference type="Rhea" id="RHEA:21412"/>
        <dbReference type="ChEBI" id="CHEBI:15378"/>
        <dbReference type="ChEBI" id="CHEBI:57540"/>
        <dbReference type="ChEBI" id="CHEBI:57642"/>
        <dbReference type="ChEBI" id="CHEBI:57685"/>
        <dbReference type="ChEBI" id="CHEBI:57945"/>
        <dbReference type="EC" id="1.1.1.261"/>
    </reaction>
</comment>
<comment type="catalytic activity">
    <reaction evidence="1">
        <text>sn-glycerol 1-phosphate + NADP(+) = dihydroxyacetone phosphate + NADPH + H(+)</text>
        <dbReference type="Rhea" id="RHEA:21416"/>
        <dbReference type="ChEBI" id="CHEBI:15378"/>
        <dbReference type="ChEBI" id="CHEBI:57642"/>
        <dbReference type="ChEBI" id="CHEBI:57685"/>
        <dbReference type="ChEBI" id="CHEBI:57783"/>
        <dbReference type="ChEBI" id="CHEBI:58349"/>
        <dbReference type="EC" id="1.1.1.261"/>
    </reaction>
</comment>
<comment type="cofactor">
    <cofactor evidence="1">
        <name>Zn(2+)</name>
        <dbReference type="ChEBI" id="CHEBI:29105"/>
    </cofactor>
    <text evidence="1">Binds 1 zinc ion per subunit.</text>
</comment>
<comment type="pathway">
    <text evidence="1">Membrane lipid metabolism; glycerophospholipid metabolism.</text>
</comment>
<comment type="subcellular location">
    <subcellularLocation>
        <location evidence="1">Cytoplasm</location>
    </subcellularLocation>
</comment>
<comment type="similarity">
    <text evidence="1">Belongs to the glycerol-1-phosphate dehydrogenase family.</text>
</comment>
<organism>
    <name type="scientific">Thermococcus sibiricus (strain DSM 12597 / MM 739)</name>
    <dbReference type="NCBI Taxonomy" id="604354"/>
    <lineage>
        <taxon>Archaea</taxon>
        <taxon>Methanobacteriati</taxon>
        <taxon>Methanobacteriota</taxon>
        <taxon>Thermococci</taxon>
        <taxon>Thermococcales</taxon>
        <taxon>Thermococcaceae</taxon>
        <taxon>Thermococcus</taxon>
    </lineage>
</organism>
<gene>
    <name evidence="1" type="primary">egsA</name>
    <name type="ordered locus">TSIB_0726</name>
</gene>
<sequence>MVMFMHLMELPREVLLGEDLKDKVSQVAKRLKLGENVLILYGPKTKEIAGKDIEKHLKEFFHVKNLLIKEASMKNVQKALEIIRNENIDWLLGVGGGSIIDVAKLASFKADVPFISFPTTASHDGIASANASIRDLGAKTSIKARPPVAVIADVNIIKTAPYRYLAAGVGDMVSNLTAVKDWELAHRIRGEYFSEYAASLSLMSAKMVIKNADIIRLSNEESVRKVIKALISSGVAMSIAGSSRPASGAEHLFSHALDAIAPKPALHGEQCGVGTIIMAYLHGLNWKKIRETLKRVGAPTNAYELEIDPGFIIEALTIAHTIRPERYTILGKDGLTKEAAEKAAKITGVI</sequence>
<reference key="1">
    <citation type="journal article" date="2009" name="Appl. Environ. Microbiol.">
        <title>Metabolic versatility and indigenous origin of the archaeon Thermococcus sibiricus, isolated from a siberian oil reservoir, as revealed by genome analysis.</title>
        <authorList>
            <person name="Mardanov A.V."/>
            <person name="Ravin N.V."/>
            <person name="Svetlitchnyi V.A."/>
            <person name="Beletsky A.V."/>
            <person name="Miroshnichenko M.L."/>
            <person name="Bonch-Osmolovskaya E.A."/>
            <person name="Skryabin K.G."/>
        </authorList>
    </citation>
    <scope>NUCLEOTIDE SEQUENCE [LARGE SCALE GENOMIC DNA]</scope>
    <source>
        <strain>DSM 12597 / MM 739</strain>
    </source>
</reference>
<name>G1PDH_THESM</name>
<protein>
    <recommendedName>
        <fullName evidence="1">Glycerol-1-phosphate dehydrogenase [NAD(P)+]</fullName>
        <shortName evidence="1">G1P dehydrogenase</shortName>
        <shortName evidence="1">G1PDH</shortName>
        <ecNumber evidence="1">1.1.1.261</ecNumber>
    </recommendedName>
    <alternativeName>
        <fullName evidence="1">Enantiomeric glycerophosphate synthase</fullName>
    </alternativeName>
    <alternativeName>
        <fullName evidence="1">sn-glycerol-1-phosphate dehydrogenase</fullName>
    </alternativeName>
</protein>
<proteinExistence type="inferred from homology"/>
<accession>C6A2E4</accession>
<keyword id="KW-0963">Cytoplasm</keyword>
<keyword id="KW-0444">Lipid biosynthesis</keyword>
<keyword id="KW-0443">Lipid metabolism</keyword>
<keyword id="KW-0479">Metal-binding</keyword>
<keyword id="KW-0520">NAD</keyword>
<keyword id="KW-0521">NADP</keyword>
<keyword id="KW-0560">Oxidoreductase</keyword>
<keyword id="KW-0594">Phospholipid biosynthesis</keyword>
<keyword id="KW-1208">Phospholipid metabolism</keyword>
<keyword id="KW-1185">Reference proteome</keyword>
<keyword id="KW-0862">Zinc</keyword>
<evidence type="ECO:0000255" key="1">
    <source>
        <dbReference type="HAMAP-Rule" id="MF_00497"/>
    </source>
</evidence>
<dbReference type="EC" id="1.1.1.261" evidence="1"/>
<dbReference type="EMBL" id="CP001463">
    <property type="protein sequence ID" value="ACS89789.1"/>
    <property type="molecule type" value="Genomic_DNA"/>
</dbReference>
<dbReference type="SMR" id="C6A2E4"/>
<dbReference type="STRING" id="604354.TSIB_0726"/>
<dbReference type="KEGG" id="tsi:TSIB_0726"/>
<dbReference type="eggNOG" id="arCOG00982">
    <property type="taxonomic scope" value="Archaea"/>
</dbReference>
<dbReference type="HOGENOM" id="CLU_038362_0_0_2"/>
<dbReference type="UniPathway" id="UPA00940"/>
<dbReference type="Proteomes" id="UP000009079">
    <property type="component" value="Chromosome"/>
</dbReference>
<dbReference type="GO" id="GO:0005737">
    <property type="term" value="C:cytoplasm"/>
    <property type="evidence" value="ECO:0007669"/>
    <property type="project" value="UniProtKB-SubCell"/>
</dbReference>
<dbReference type="GO" id="GO:0106357">
    <property type="term" value="F:glycerol-1-phosphate dehydrogenase (NAD+) activity"/>
    <property type="evidence" value="ECO:0007669"/>
    <property type="project" value="RHEA"/>
</dbReference>
<dbReference type="GO" id="GO:0106358">
    <property type="term" value="F:glycerol-1-phosphate dehydrogenase (NADP+) activity"/>
    <property type="evidence" value="ECO:0007669"/>
    <property type="project" value="RHEA"/>
</dbReference>
<dbReference type="GO" id="GO:0046872">
    <property type="term" value="F:metal ion binding"/>
    <property type="evidence" value="ECO:0007669"/>
    <property type="project" value="UniProtKB-KW"/>
</dbReference>
<dbReference type="GO" id="GO:0006650">
    <property type="term" value="P:glycerophospholipid metabolic process"/>
    <property type="evidence" value="ECO:0007669"/>
    <property type="project" value="UniProtKB-UniRule"/>
</dbReference>
<dbReference type="GO" id="GO:0008654">
    <property type="term" value="P:phospholipid biosynthetic process"/>
    <property type="evidence" value="ECO:0007669"/>
    <property type="project" value="UniProtKB-KW"/>
</dbReference>
<dbReference type="CDD" id="cd08173">
    <property type="entry name" value="Gro1PDH"/>
    <property type="match status" value="1"/>
</dbReference>
<dbReference type="Gene3D" id="3.40.50.1970">
    <property type="match status" value="1"/>
</dbReference>
<dbReference type="Gene3D" id="1.20.1090.10">
    <property type="entry name" value="Dehydroquinate synthase-like - alpha domain"/>
    <property type="match status" value="1"/>
</dbReference>
<dbReference type="HAMAP" id="MF_00497_A">
    <property type="entry name" value="G1P_dehydrogenase_A"/>
    <property type="match status" value="1"/>
</dbReference>
<dbReference type="InterPro" id="IPR023002">
    <property type="entry name" value="G1P_dehydrogenase_arc"/>
</dbReference>
<dbReference type="InterPro" id="IPR032837">
    <property type="entry name" value="G1PDH"/>
</dbReference>
<dbReference type="InterPro" id="IPR016205">
    <property type="entry name" value="Glycerol_DH"/>
</dbReference>
<dbReference type="NCBIfam" id="NF002022">
    <property type="entry name" value="PRK00843.1"/>
    <property type="match status" value="1"/>
</dbReference>
<dbReference type="PANTHER" id="PTHR43616">
    <property type="entry name" value="GLYCEROL DEHYDROGENASE"/>
    <property type="match status" value="1"/>
</dbReference>
<dbReference type="PANTHER" id="PTHR43616:SF5">
    <property type="entry name" value="GLYCEROL DEHYDROGENASE 1"/>
    <property type="match status" value="1"/>
</dbReference>
<dbReference type="Pfam" id="PF13685">
    <property type="entry name" value="Fe-ADH_2"/>
    <property type="match status" value="1"/>
</dbReference>
<dbReference type="PIRSF" id="PIRSF000112">
    <property type="entry name" value="Glycerol_dehydrogenase"/>
    <property type="match status" value="1"/>
</dbReference>
<dbReference type="SUPFAM" id="SSF56796">
    <property type="entry name" value="Dehydroquinate synthase-like"/>
    <property type="match status" value="1"/>
</dbReference>